<accession>A4QND0</accession>
<dbReference type="EMBL" id="BC135438">
    <property type="protein sequence ID" value="AAI35439.1"/>
    <property type="molecule type" value="mRNA"/>
</dbReference>
<dbReference type="RefSeq" id="NP_001096510.1">
    <property type="nucleotide sequence ID" value="NM_001103040.1"/>
</dbReference>
<dbReference type="SMR" id="A4QND0"/>
<dbReference type="FunCoup" id="A4QND0">
    <property type="interactions" value="2088"/>
</dbReference>
<dbReference type="STRING" id="8364.ENSXETP00000027400"/>
<dbReference type="PaxDb" id="8364-ENSXETP00000015581"/>
<dbReference type="GeneID" id="100125140"/>
<dbReference type="KEGG" id="xtr:100125140"/>
<dbReference type="AGR" id="Xenbase:XB-GENE-6455973"/>
<dbReference type="CTD" id="8266"/>
<dbReference type="Xenbase" id="XB-GENE-6455973">
    <property type="gene designation" value="ubl4a"/>
</dbReference>
<dbReference type="eggNOG" id="KOG0001">
    <property type="taxonomic scope" value="Eukaryota"/>
</dbReference>
<dbReference type="HOGENOM" id="CLU_119809_0_0_1"/>
<dbReference type="InParanoid" id="A4QND0"/>
<dbReference type="OMA" id="SMDTSYM"/>
<dbReference type="OrthoDB" id="417450at2759"/>
<dbReference type="PhylomeDB" id="A4QND0"/>
<dbReference type="TreeFam" id="TF354228"/>
<dbReference type="Proteomes" id="UP000008143">
    <property type="component" value="Chromosome 8"/>
</dbReference>
<dbReference type="GO" id="GO:0071818">
    <property type="term" value="C:BAT3 complex"/>
    <property type="evidence" value="ECO:0000250"/>
    <property type="project" value="UniProtKB"/>
</dbReference>
<dbReference type="GO" id="GO:0005829">
    <property type="term" value="C:cytosol"/>
    <property type="evidence" value="ECO:0000250"/>
    <property type="project" value="UniProtKB"/>
</dbReference>
<dbReference type="GO" id="GO:0005634">
    <property type="term" value="C:nucleus"/>
    <property type="evidence" value="ECO:0007669"/>
    <property type="project" value="UniProtKB-SubCell"/>
</dbReference>
<dbReference type="GO" id="GO:0006620">
    <property type="term" value="P:post-translational protein targeting to endoplasmic reticulum membrane"/>
    <property type="evidence" value="ECO:0007669"/>
    <property type="project" value="InterPro"/>
</dbReference>
<dbReference type="GO" id="GO:0071816">
    <property type="term" value="P:tail-anchored membrane protein insertion into ER membrane"/>
    <property type="evidence" value="ECO:0000250"/>
    <property type="project" value="UniProtKB"/>
</dbReference>
<dbReference type="CDD" id="cd01807">
    <property type="entry name" value="Ubl_UBL4A_like"/>
    <property type="match status" value="1"/>
</dbReference>
<dbReference type="FunFam" id="3.10.20.90:FF:000144">
    <property type="entry name" value="Ubiquitin-like protein 4A"/>
    <property type="match status" value="1"/>
</dbReference>
<dbReference type="Gene3D" id="3.10.20.90">
    <property type="entry name" value="Phosphatidylinositol 3-kinase Catalytic Subunit, Chain A, domain 1"/>
    <property type="match status" value="1"/>
</dbReference>
<dbReference type="InterPro" id="IPR000626">
    <property type="entry name" value="Ubiquitin-like_dom"/>
</dbReference>
<dbReference type="InterPro" id="IPR029071">
    <property type="entry name" value="Ubiquitin-like_domsf"/>
</dbReference>
<dbReference type="InterPro" id="IPR019954">
    <property type="entry name" value="Ubiquitin_CS"/>
</dbReference>
<dbReference type="InterPro" id="IPR019956">
    <property type="entry name" value="Ubiquitin_dom"/>
</dbReference>
<dbReference type="InterPro" id="IPR041421">
    <property type="entry name" value="Ubl4_C_TUGS"/>
</dbReference>
<dbReference type="InterPro" id="IPR047154">
    <property type="entry name" value="UBL4A-like"/>
</dbReference>
<dbReference type="InterPro" id="IPR044724">
    <property type="entry name" value="Ubl_UBL4A-like"/>
</dbReference>
<dbReference type="PANTHER" id="PTHR46555">
    <property type="entry name" value="UBIQUITIN-LIKE PROTEIN 4A"/>
    <property type="match status" value="1"/>
</dbReference>
<dbReference type="PANTHER" id="PTHR46555:SF1">
    <property type="entry name" value="UBIQUITIN-LIKE PROTEIN 4A"/>
    <property type="match status" value="1"/>
</dbReference>
<dbReference type="Pfam" id="PF17840">
    <property type="entry name" value="Tugs"/>
    <property type="match status" value="1"/>
</dbReference>
<dbReference type="Pfam" id="PF00240">
    <property type="entry name" value="ubiquitin"/>
    <property type="match status" value="1"/>
</dbReference>
<dbReference type="PRINTS" id="PR00348">
    <property type="entry name" value="UBIQUITIN"/>
</dbReference>
<dbReference type="SMART" id="SM00213">
    <property type="entry name" value="UBQ"/>
    <property type="match status" value="1"/>
</dbReference>
<dbReference type="SUPFAM" id="SSF54236">
    <property type="entry name" value="Ubiquitin-like"/>
    <property type="match status" value="1"/>
</dbReference>
<dbReference type="PROSITE" id="PS00299">
    <property type="entry name" value="UBIQUITIN_1"/>
    <property type="match status" value="1"/>
</dbReference>
<dbReference type="PROSITE" id="PS50053">
    <property type="entry name" value="UBIQUITIN_2"/>
    <property type="match status" value="1"/>
</dbReference>
<organism>
    <name type="scientific">Xenopus tropicalis</name>
    <name type="common">Western clawed frog</name>
    <name type="synonym">Silurana tropicalis</name>
    <dbReference type="NCBI Taxonomy" id="8364"/>
    <lineage>
        <taxon>Eukaryota</taxon>
        <taxon>Metazoa</taxon>
        <taxon>Chordata</taxon>
        <taxon>Craniata</taxon>
        <taxon>Vertebrata</taxon>
        <taxon>Euteleostomi</taxon>
        <taxon>Amphibia</taxon>
        <taxon>Batrachia</taxon>
        <taxon>Anura</taxon>
        <taxon>Pipoidea</taxon>
        <taxon>Pipidae</taxon>
        <taxon>Xenopodinae</taxon>
        <taxon>Xenopus</taxon>
        <taxon>Silurana</taxon>
    </lineage>
</organism>
<gene>
    <name type="primary">ubl4a</name>
</gene>
<feature type="chain" id="PRO_0000403749" description="Ubiquitin-like protein 4A">
    <location>
        <begin position="1"/>
        <end position="148"/>
    </location>
</feature>
<feature type="domain" description="Ubiquitin-like" evidence="2">
    <location>
        <begin position="1"/>
        <end position="76"/>
    </location>
</feature>
<sequence length="148" mass="16552">MQLTVKALKGKEANIQVSEGDTVLAVKRLVEEKLKVPVSQQRLLFRGKALADEHCLAHYSIGPGSRLNLMVKEQVAPEGHSGGNTAWKSLSVILRKHFSPTDAERVLEYVQKDYERSLSLLSLDDIERLATRILHPQYSEATDLGFLD</sequence>
<protein>
    <recommendedName>
        <fullName>Ubiquitin-like protein 4A</fullName>
    </recommendedName>
</protein>
<proteinExistence type="evidence at transcript level"/>
<evidence type="ECO:0000250" key="1">
    <source>
        <dbReference type="UniProtKB" id="P11441"/>
    </source>
</evidence>
<evidence type="ECO:0000255" key="2">
    <source>
        <dbReference type="PROSITE-ProRule" id="PRU00214"/>
    </source>
</evidence>
<keyword id="KW-0963">Cytoplasm</keyword>
<keyword id="KW-0539">Nucleus</keyword>
<keyword id="KW-1185">Reference proteome</keyword>
<keyword id="KW-0813">Transport</keyword>
<reference key="1">
    <citation type="submission" date="2007-03" db="EMBL/GenBank/DDBJ databases">
        <authorList>
            <consortium name="NIH - Xenopus Gene Collection (XGC) project"/>
        </authorList>
    </citation>
    <scope>NUCLEOTIDE SEQUENCE [LARGE SCALE MRNA]</scope>
    <source>
        <tissue>Embryo</tissue>
    </source>
</reference>
<name>UBL4A_XENTR</name>
<comment type="function">
    <text evidence="1">As part of a cytosolic protein quality control complex, the bag6/bat3 complex, maintains misfolded and hydrophobic patches-containing proteins in a soluble state and participates in their proper delivery to the endoplasmic reticulum or alternatively can promote their sorting to the proteasome where they undergo degradation. The bag6/bat3 complex is involved in the post-translational delivery of tail-anchored/type II transmembrane proteins to the endoplasmic reticulum membrane. Similarly, the bag6/bat3 complex also functions as a sorting platform for proteins of the secretory pathway that are mislocalized to the cytosol either delivering them to the proteasome for degradation or to the endoplasmic reticulum. The bag6/bat3 complex also plays a role in the endoplasmic reticulum-associated degradation (ERAD), a quality control mechanism that eliminates unwanted proteins of the endoplasmic reticulum through their retrotranslocation to the cytosol and their targeting to the proteasome. It maintains these retrotranslocated proteins in an unfolded yet soluble state condition in the cytosol to ensure their proper delivery to the proteasome.</text>
</comment>
<comment type="subunit">
    <text evidence="1">Component of the bag6/bat3 complex.</text>
</comment>
<comment type="subcellular location">
    <subcellularLocation>
        <location evidence="1">Cytoplasm</location>
        <location evidence="1">Cytosol</location>
    </subcellularLocation>
    <subcellularLocation>
        <location evidence="1">Nucleus</location>
    </subcellularLocation>
</comment>